<feature type="chain" id="PRO_1000187040" description="3-demethoxyubiquinol 3-hydroxylase">
    <location>
        <begin position="1"/>
        <end position="211"/>
    </location>
</feature>
<feature type="binding site" evidence="1">
    <location>
        <position position="60"/>
    </location>
    <ligand>
        <name>Fe cation</name>
        <dbReference type="ChEBI" id="CHEBI:24875"/>
        <label>1</label>
    </ligand>
</feature>
<feature type="binding site" evidence="1">
    <location>
        <position position="90"/>
    </location>
    <ligand>
        <name>Fe cation</name>
        <dbReference type="ChEBI" id="CHEBI:24875"/>
        <label>1</label>
    </ligand>
</feature>
<feature type="binding site" evidence="1">
    <location>
        <position position="90"/>
    </location>
    <ligand>
        <name>Fe cation</name>
        <dbReference type="ChEBI" id="CHEBI:24875"/>
        <label>2</label>
    </ligand>
</feature>
<feature type="binding site" evidence="1">
    <location>
        <position position="93"/>
    </location>
    <ligand>
        <name>Fe cation</name>
        <dbReference type="ChEBI" id="CHEBI:24875"/>
        <label>1</label>
    </ligand>
</feature>
<feature type="binding site" evidence="1">
    <location>
        <position position="142"/>
    </location>
    <ligand>
        <name>Fe cation</name>
        <dbReference type="ChEBI" id="CHEBI:24875"/>
        <label>2</label>
    </ligand>
</feature>
<feature type="binding site" evidence="1">
    <location>
        <position position="174"/>
    </location>
    <ligand>
        <name>Fe cation</name>
        <dbReference type="ChEBI" id="CHEBI:24875"/>
        <label>1</label>
    </ligand>
</feature>
<feature type="binding site" evidence="1">
    <location>
        <position position="174"/>
    </location>
    <ligand>
        <name>Fe cation</name>
        <dbReference type="ChEBI" id="CHEBI:24875"/>
        <label>2</label>
    </ligand>
</feature>
<feature type="binding site" evidence="1">
    <location>
        <position position="177"/>
    </location>
    <ligand>
        <name>Fe cation</name>
        <dbReference type="ChEBI" id="CHEBI:24875"/>
        <label>2</label>
    </ligand>
</feature>
<dbReference type="EC" id="1.14.99.60" evidence="1"/>
<dbReference type="EMBL" id="CP001182">
    <property type="protein sequence ID" value="ACJ42578.1"/>
    <property type="molecule type" value="Genomic_DNA"/>
</dbReference>
<dbReference type="RefSeq" id="WP_001216787.1">
    <property type="nucleotide sequence ID" value="NC_011586.2"/>
</dbReference>
<dbReference type="SMR" id="B7IB81"/>
<dbReference type="GeneID" id="92894376"/>
<dbReference type="KEGG" id="abn:AB57_2467"/>
<dbReference type="HOGENOM" id="CLU_088601_0_0_6"/>
<dbReference type="UniPathway" id="UPA00232"/>
<dbReference type="Proteomes" id="UP000007094">
    <property type="component" value="Chromosome"/>
</dbReference>
<dbReference type="GO" id="GO:0005886">
    <property type="term" value="C:plasma membrane"/>
    <property type="evidence" value="ECO:0007669"/>
    <property type="project" value="UniProtKB-SubCell"/>
</dbReference>
<dbReference type="GO" id="GO:0008682">
    <property type="term" value="F:3-demethoxyubiquinol 3-hydroxylase activity"/>
    <property type="evidence" value="ECO:0007669"/>
    <property type="project" value="UniProtKB-EC"/>
</dbReference>
<dbReference type="GO" id="GO:0046872">
    <property type="term" value="F:metal ion binding"/>
    <property type="evidence" value="ECO:0007669"/>
    <property type="project" value="UniProtKB-KW"/>
</dbReference>
<dbReference type="GO" id="GO:0006744">
    <property type="term" value="P:ubiquinone biosynthetic process"/>
    <property type="evidence" value="ECO:0007669"/>
    <property type="project" value="UniProtKB-UniRule"/>
</dbReference>
<dbReference type="CDD" id="cd01042">
    <property type="entry name" value="DMQH"/>
    <property type="match status" value="1"/>
</dbReference>
<dbReference type="Gene3D" id="1.20.1260.10">
    <property type="match status" value="1"/>
</dbReference>
<dbReference type="HAMAP" id="MF_01658">
    <property type="entry name" value="COQ7"/>
    <property type="match status" value="1"/>
</dbReference>
<dbReference type="InterPro" id="IPR047809">
    <property type="entry name" value="COQ7_proteobact"/>
</dbReference>
<dbReference type="InterPro" id="IPR012347">
    <property type="entry name" value="Ferritin-like"/>
</dbReference>
<dbReference type="InterPro" id="IPR009078">
    <property type="entry name" value="Ferritin-like_SF"/>
</dbReference>
<dbReference type="InterPro" id="IPR011566">
    <property type="entry name" value="Ubq_synth_Coq7"/>
</dbReference>
<dbReference type="NCBIfam" id="NF033656">
    <property type="entry name" value="DMQ_monoox_COQ7"/>
    <property type="match status" value="1"/>
</dbReference>
<dbReference type="PANTHER" id="PTHR11237:SF4">
    <property type="entry name" value="5-DEMETHOXYUBIQUINONE HYDROXYLASE, MITOCHONDRIAL"/>
    <property type="match status" value="1"/>
</dbReference>
<dbReference type="PANTHER" id="PTHR11237">
    <property type="entry name" value="COENZYME Q10 BIOSYNTHESIS PROTEIN 7"/>
    <property type="match status" value="1"/>
</dbReference>
<dbReference type="Pfam" id="PF03232">
    <property type="entry name" value="COQ7"/>
    <property type="match status" value="1"/>
</dbReference>
<dbReference type="SUPFAM" id="SSF47240">
    <property type="entry name" value="Ferritin-like"/>
    <property type="match status" value="1"/>
</dbReference>
<reference key="1">
    <citation type="journal article" date="2008" name="J. Bacteriol.">
        <title>Comparative genome sequence analysis of multidrug-resistant Acinetobacter baumannii.</title>
        <authorList>
            <person name="Adams M.D."/>
            <person name="Goglin K."/>
            <person name="Molyneaux N."/>
            <person name="Hujer K.M."/>
            <person name="Lavender H."/>
            <person name="Jamison J.J."/>
            <person name="MacDonald I.J."/>
            <person name="Martin K.M."/>
            <person name="Russo T."/>
            <person name="Campagnari A.A."/>
            <person name="Hujer A.M."/>
            <person name="Bonomo R.A."/>
            <person name="Gill S.R."/>
        </authorList>
    </citation>
    <scope>NUCLEOTIDE SEQUENCE [LARGE SCALE GENOMIC DNA]</scope>
    <source>
        <strain>AB0057</strain>
    </source>
</reference>
<proteinExistence type="inferred from homology"/>
<evidence type="ECO:0000255" key="1">
    <source>
        <dbReference type="HAMAP-Rule" id="MF_01658"/>
    </source>
</evidence>
<accession>B7IB81</accession>
<keyword id="KW-1003">Cell membrane</keyword>
<keyword id="KW-0408">Iron</keyword>
<keyword id="KW-0472">Membrane</keyword>
<keyword id="KW-0479">Metal-binding</keyword>
<keyword id="KW-0503">Monooxygenase</keyword>
<keyword id="KW-0560">Oxidoreductase</keyword>
<keyword id="KW-0831">Ubiquinone biosynthesis</keyword>
<name>COQ7_ACIB5</name>
<protein>
    <recommendedName>
        <fullName evidence="1">3-demethoxyubiquinol 3-hydroxylase</fullName>
        <shortName evidence="1">DMQ hydroxylase</shortName>
        <ecNumber evidence="1">1.14.99.60</ecNumber>
    </recommendedName>
    <alternativeName>
        <fullName evidence="1">2-nonaprenyl-3-methyl-6-methoxy-1,4-benzoquinol hydroxylase</fullName>
    </alternativeName>
</protein>
<sequence>MRHYTGIDQLINSFDQALRSLVPGATAAQRQNPAETVEAKLGVEDARHVAGLMRVNHSGEVCAQALYHGQALTAKLPNVRREMQQAAIEEQDHLAWCEDRLKELNSHTSLLNPIWYGLSYGMGALAGIAGDKYSLGFVAETERQVSLHLQDHLNQLPAQDERSRKILEQMNEDELHHRHTALEAGGVELPYAVKITMTAISKLMTKTSYYL</sequence>
<gene>
    <name evidence="1" type="primary">coq7</name>
    <name type="ordered locus">AB57_2467</name>
</gene>
<organism>
    <name type="scientific">Acinetobacter baumannii (strain AB0057)</name>
    <dbReference type="NCBI Taxonomy" id="480119"/>
    <lineage>
        <taxon>Bacteria</taxon>
        <taxon>Pseudomonadati</taxon>
        <taxon>Pseudomonadota</taxon>
        <taxon>Gammaproteobacteria</taxon>
        <taxon>Moraxellales</taxon>
        <taxon>Moraxellaceae</taxon>
        <taxon>Acinetobacter</taxon>
        <taxon>Acinetobacter calcoaceticus/baumannii complex</taxon>
    </lineage>
</organism>
<comment type="function">
    <text evidence="1">Catalyzes the hydroxylation of 2-nonaprenyl-3-methyl-6-methoxy-1,4-benzoquinol during ubiquinone biosynthesis.</text>
</comment>
<comment type="catalytic activity">
    <reaction evidence="1">
        <text>a 5-methoxy-2-methyl-3-(all-trans-polyprenyl)benzene-1,4-diol + AH2 + O2 = a 3-demethylubiquinol + A + H2O</text>
        <dbReference type="Rhea" id="RHEA:50908"/>
        <dbReference type="Rhea" id="RHEA-COMP:10859"/>
        <dbReference type="Rhea" id="RHEA-COMP:10914"/>
        <dbReference type="ChEBI" id="CHEBI:13193"/>
        <dbReference type="ChEBI" id="CHEBI:15377"/>
        <dbReference type="ChEBI" id="CHEBI:15379"/>
        <dbReference type="ChEBI" id="CHEBI:17499"/>
        <dbReference type="ChEBI" id="CHEBI:84167"/>
        <dbReference type="ChEBI" id="CHEBI:84422"/>
        <dbReference type="EC" id="1.14.99.60"/>
    </reaction>
</comment>
<comment type="cofactor">
    <cofactor evidence="1">
        <name>Fe cation</name>
        <dbReference type="ChEBI" id="CHEBI:24875"/>
    </cofactor>
    <text evidence="1">Binds 2 iron ions per subunit.</text>
</comment>
<comment type="pathway">
    <text evidence="1">Cofactor biosynthesis; ubiquinone biosynthesis.</text>
</comment>
<comment type="subcellular location">
    <subcellularLocation>
        <location evidence="1">Cell membrane</location>
        <topology evidence="1">Peripheral membrane protein</topology>
    </subcellularLocation>
</comment>
<comment type="similarity">
    <text evidence="1">Belongs to the COQ7 family.</text>
</comment>